<sequence>MTSPSHASDRGGGDGDSVENQSPELRKDPVTNRWVIFSPARAKRPTDFKSKSPQNPNPKPSSCPFCIGREQECAPELFRVPDHDPNWKLRVIENLYPALSRNLETQSTQPETGTSRTIVGFGFHDVVIESPVHSIQLSDIDPVGIGDILIAYKKRINQIAQHDSINYIQVFKNQGASAGASMSHSHSQMMALPVVPPTVSSRLDGTKDYFEETGKCCLCEAKSKHFVIDESSHFVSVAPFAATYPFEIWIIPKDHSSHFHHLDDVKAVDLGGLLKLMLQKIAKQLNDPPYNYMIHTSPLKVTESQLPYTHWFLQIVPQLSGVGGFEIGTGCYINPVFPEDVAKVMREVSLT</sequence>
<accession>Q9FK51</accession>
<accession>Q8LB75</accession>
<reference key="1">
    <citation type="journal article" date="1998" name="DNA Res.">
        <title>Structural analysis of Arabidopsis thaliana chromosome 5. VI. Sequence features of the regions of 1,367,185 bp covered by 19 physically assigned P1 and TAC clones.</title>
        <authorList>
            <person name="Kotani H."/>
            <person name="Nakamura Y."/>
            <person name="Sato S."/>
            <person name="Asamizu E."/>
            <person name="Kaneko T."/>
            <person name="Miyajima N."/>
            <person name="Tabata S."/>
        </authorList>
    </citation>
    <scope>NUCLEOTIDE SEQUENCE [LARGE SCALE GENOMIC DNA]</scope>
    <source>
        <strain>cv. Columbia</strain>
    </source>
</reference>
<reference key="2">
    <citation type="journal article" date="2017" name="Plant J.">
        <title>Araport11: a complete reannotation of the Arabidopsis thaliana reference genome.</title>
        <authorList>
            <person name="Cheng C.Y."/>
            <person name="Krishnakumar V."/>
            <person name="Chan A.P."/>
            <person name="Thibaud-Nissen F."/>
            <person name="Schobel S."/>
            <person name="Town C.D."/>
        </authorList>
    </citation>
    <scope>GENOME REANNOTATION</scope>
    <source>
        <strain>cv. Columbia</strain>
    </source>
</reference>
<reference key="3">
    <citation type="journal article" date="2003" name="Science">
        <title>Empirical analysis of transcriptional activity in the Arabidopsis genome.</title>
        <authorList>
            <person name="Yamada K."/>
            <person name="Lim J."/>
            <person name="Dale J.M."/>
            <person name="Chen H."/>
            <person name="Shinn P."/>
            <person name="Palm C.J."/>
            <person name="Southwick A.M."/>
            <person name="Wu H.C."/>
            <person name="Kim C.J."/>
            <person name="Nguyen M."/>
            <person name="Pham P.K."/>
            <person name="Cheuk R.F."/>
            <person name="Karlin-Newmann G."/>
            <person name="Liu S.X."/>
            <person name="Lam B."/>
            <person name="Sakano H."/>
            <person name="Wu T."/>
            <person name="Yu G."/>
            <person name="Miranda M."/>
            <person name="Quach H.L."/>
            <person name="Tripp M."/>
            <person name="Chang C.H."/>
            <person name="Lee J.M."/>
            <person name="Toriumi M.J."/>
            <person name="Chan M.M."/>
            <person name="Tang C.C."/>
            <person name="Onodera C.S."/>
            <person name="Deng J.M."/>
            <person name="Akiyama K."/>
            <person name="Ansari Y."/>
            <person name="Arakawa T."/>
            <person name="Banh J."/>
            <person name="Banno F."/>
            <person name="Bowser L."/>
            <person name="Brooks S.Y."/>
            <person name="Carninci P."/>
            <person name="Chao Q."/>
            <person name="Choy N."/>
            <person name="Enju A."/>
            <person name="Goldsmith A.D."/>
            <person name="Gurjal M."/>
            <person name="Hansen N.F."/>
            <person name="Hayashizaki Y."/>
            <person name="Johnson-Hopson C."/>
            <person name="Hsuan V.W."/>
            <person name="Iida K."/>
            <person name="Karnes M."/>
            <person name="Khan S."/>
            <person name="Koesema E."/>
            <person name="Ishida J."/>
            <person name="Jiang P.X."/>
            <person name="Jones T."/>
            <person name="Kawai J."/>
            <person name="Kamiya A."/>
            <person name="Meyers C."/>
            <person name="Nakajima M."/>
            <person name="Narusaka M."/>
            <person name="Seki M."/>
            <person name="Sakurai T."/>
            <person name="Satou M."/>
            <person name="Tamse R."/>
            <person name="Vaysberg M."/>
            <person name="Wallender E.K."/>
            <person name="Wong C."/>
            <person name="Yamamura Y."/>
            <person name="Yuan S."/>
            <person name="Shinozaki K."/>
            <person name="Davis R.W."/>
            <person name="Theologis A."/>
            <person name="Ecker J.R."/>
        </authorList>
    </citation>
    <scope>NUCLEOTIDE SEQUENCE [LARGE SCALE MRNA]</scope>
    <source>
        <strain>cv. Columbia</strain>
    </source>
</reference>
<reference key="4">
    <citation type="submission" date="2002-03" db="EMBL/GenBank/DDBJ databases">
        <title>Full-length cDNA from Arabidopsis thaliana.</title>
        <authorList>
            <person name="Brover V.V."/>
            <person name="Troukhan M.E."/>
            <person name="Alexandrov N.A."/>
            <person name="Lu Y.-P."/>
            <person name="Flavell R.B."/>
            <person name="Feldmann K.A."/>
        </authorList>
    </citation>
    <scope>NUCLEOTIDE SEQUENCE [LARGE SCALE MRNA]</scope>
</reference>
<reference key="5">
    <citation type="journal article" date="2006" name="Biochemistry">
        <title>Structure and mechanism of an ADP-glucose phosphorylase from Arabidopsis thaliana.</title>
        <authorList>
            <person name="McCoy J.G."/>
            <person name="Arabshahi A."/>
            <person name="Bitto E."/>
            <person name="Bingman C.A."/>
            <person name="Ruzicka F.J."/>
            <person name="Frey P.A."/>
            <person name="Phillips G.N. Jr."/>
        </authorList>
    </citation>
    <scope>X-RAY CRYSTALLOGRAPHY (1.83 ANGSTROMS) IN COMPLEX WITH AMP AND ZINC IONS</scope>
    <scope>FUNCTION</scope>
    <scope>SUBUNIT</scope>
    <scope>CATALYTIC ACTIVITY</scope>
    <scope>ACTIVE SITE</scope>
    <scope>BIOPHYSICOCHEMICAL PROPERTIES</scope>
</reference>
<reference key="6">
    <citation type="submission" date="2006-05" db="PDB data bank">
        <title>Crystal structure of an ADP-glucose phosphorylase from Arabidopsis thaliana with bound ADP-glucose.</title>
        <authorList>
            <person name="McCoy J.G."/>
            <person name="Wesenberg G.E."/>
            <person name="Phillips G.N. Jr."/>
            <person name="Bitto E."/>
            <person name="Bingman C.A."/>
        </authorList>
    </citation>
    <scope>X-RAY CRYSTALLOGRAPHY (2.23 ANGSTROMS) IN COMPLEX WITH SUBSTRATE AND ZINC IONS</scope>
    <scope>SUBUNIT</scope>
</reference>
<reference key="7">
    <citation type="journal article" date="2007" name="Structure">
        <title>Ensemble refinement of protein crystal structures: validation and application.</title>
        <authorList>
            <person name="Levin E.J."/>
            <person name="Kondrashov D.A."/>
            <person name="Wesenberg G.E."/>
            <person name="Phillips G.N. Jr."/>
        </authorList>
    </citation>
    <scope>X-RAY CRYSTALLOGRAPHY (1.83 ANGSTROMS) IN COMPLEX WITH AMP AND ZINC IONS</scope>
    <scope>ACTIVE SITE</scope>
    <scope>SUBUNIT</scope>
</reference>
<gene>
    <name type="ordered locus">At5g18200</name>
    <name type="ORF">MRG7.16</name>
</gene>
<feature type="chain" id="PRO_0000169887" description="ADP-glucose phosphorylase">
    <location>
        <begin position="1"/>
        <end position="351"/>
    </location>
</feature>
<feature type="region of interest" description="Disordered" evidence="1">
    <location>
        <begin position="1"/>
        <end position="63"/>
    </location>
</feature>
<feature type="active site" description="Tele-AMP-histidine intermediate" evidence="2 3">
    <location>
        <position position="186"/>
    </location>
</feature>
<feature type="binding site" evidence="4">
    <location>
        <begin position="41"/>
        <end position="44"/>
    </location>
    <ligand>
        <name>ADP-alpha-D-glucose</name>
        <dbReference type="ChEBI" id="CHEBI:57498"/>
    </ligand>
</feature>
<feature type="binding site" evidence="2 3 4">
    <location>
        <position position="63"/>
    </location>
    <ligand>
        <name>Zn(2+)</name>
        <dbReference type="ChEBI" id="CHEBI:29105"/>
        <label>1</label>
    </ligand>
</feature>
<feature type="binding site" evidence="2 3 4">
    <location>
        <position position="66"/>
    </location>
    <ligand>
        <name>Zn(2+)</name>
        <dbReference type="ChEBI" id="CHEBI:29105"/>
        <label>1</label>
    </ligand>
</feature>
<feature type="binding site" evidence="4">
    <location>
        <begin position="72"/>
        <end position="74"/>
    </location>
    <ligand>
        <name>ADP-alpha-D-glucose</name>
        <dbReference type="ChEBI" id="CHEBI:57498"/>
    </ligand>
</feature>
<feature type="binding site" evidence="4">
    <location>
        <position position="94"/>
    </location>
    <ligand>
        <name>ADP-alpha-D-glucose</name>
        <dbReference type="ChEBI" id="CHEBI:57498"/>
    </ligand>
</feature>
<feature type="binding site" evidence="2 3 4">
    <location>
        <position position="133"/>
    </location>
    <ligand>
        <name>Zn(2+)</name>
        <dbReference type="ChEBI" id="CHEBI:29105"/>
        <label>1</label>
    </ligand>
</feature>
<feature type="binding site" evidence="4">
    <location>
        <position position="173"/>
    </location>
    <ligand>
        <name>ADP-alpha-D-glucose</name>
        <dbReference type="ChEBI" id="CHEBI:57498"/>
    </ligand>
</feature>
<feature type="binding site" evidence="4">
    <location>
        <begin position="179"/>
        <end position="182"/>
    </location>
    <ligand>
        <name>ADP-alpha-D-glucose</name>
        <dbReference type="ChEBI" id="CHEBI:57498"/>
    </ligand>
</feature>
<feature type="binding site" evidence="2 3 4">
    <location>
        <position position="184"/>
    </location>
    <ligand>
        <name>Zn(2+)</name>
        <dbReference type="ChEBI" id="CHEBI:29105"/>
        <label>1</label>
    </ligand>
</feature>
<feature type="binding site" evidence="4">
    <location>
        <position position="188"/>
    </location>
    <ligand>
        <name>ADP-alpha-D-glucose</name>
        <dbReference type="ChEBI" id="CHEBI:57498"/>
    </ligand>
</feature>
<feature type="binding site" evidence="2 3 4">
    <location>
        <position position="216"/>
    </location>
    <ligand>
        <name>Zn(2+)</name>
        <dbReference type="ChEBI" id="CHEBI:29105"/>
        <label>2</label>
    </ligand>
</feature>
<feature type="binding site" evidence="2 3 4">
    <location>
        <position position="219"/>
    </location>
    <ligand>
        <name>Zn(2+)</name>
        <dbReference type="ChEBI" id="CHEBI:29105"/>
        <label>2</label>
    </ligand>
</feature>
<feature type="binding site" evidence="2 3 4">
    <location>
        <position position="255"/>
    </location>
    <ligand>
        <name>Zn(2+)</name>
        <dbReference type="ChEBI" id="CHEBI:29105"/>
        <label>2</label>
    </ligand>
</feature>
<feature type="binding site" evidence="2 3 4">
    <location>
        <position position="310"/>
    </location>
    <ligand>
        <name>Zn(2+)</name>
        <dbReference type="ChEBI" id="CHEBI:29105"/>
        <label>2</label>
    </ligand>
</feature>
<feature type="binding site" evidence="4">
    <location>
        <position position="321"/>
    </location>
    <ligand>
        <name>ADP-alpha-D-glucose</name>
        <dbReference type="ChEBI" id="CHEBI:57498"/>
    </ligand>
</feature>
<feature type="binding site" evidence="4">
    <location>
        <begin position="325"/>
        <end position="326"/>
    </location>
    <ligand>
        <name>ADP-alpha-D-glucose</name>
        <dbReference type="ChEBI" id="CHEBI:57498"/>
    </ligand>
</feature>
<feature type="sequence conflict" description="In Ref. 4; AAM64928." evidence="5" ref="4">
    <original>I</original>
    <variation>V</variation>
    <location>
        <position position="148"/>
    </location>
</feature>
<feature type="sequence conflict" description="In Ref. 4; AAM64928." evidence="5" ref="4">
    <original>S</original>
    <variation>N</variation>
    <location>
        <position position="349"/>
    </location>
</feature>
<feature type="strand" evidence="6">
    <location>
        <begin position="24"/>
        <end position="28"/>
    </location>
</feature>
<feature type="turn" evidence="6">
    <location>
        <begin position="29"/>
        <end position="32"/>
    </location>
</feature>
<feature type="strand" evidence="6">
    <location>
        <begin position="33"/>
        <end position="37"/>
    </location>
</feature>
<feature type="helix" evidence="7">
    <location>
        <begin position="39"/>
        <end position="43"/>
    </location>
</feature>
<feature type="helix" evidence="6">
    <location>
        <begin position="45"/>
        <end position="47"/>
    </location>
</feature>
<feature type="helix" evidence="6">
    <location>
        <begin position="70"/>
        <end position="72"/>
    </location>
</feature>
<feature type="strand" evidence="6">
    <location>
        <begin position="76"/>
        <end position="81"/>
    </location>
</feature>
<feature type="strand" evidence="6">
    <location>
        <begin position="88"/>
        <end position="93"/>
    </location>
</feature>
<feature type="strand" evidence="6">
    <location>
        <begin position="98"/>
        <end position="100"/>
    </location>
</feature>
<feature type="helix" evidence="6">
    <location>
        <begin position="101"/>
        <end position="103"/>
    </location>
</feature>
<feature type="turn" evidence="6">
    <location>
        <begin position="104"/>
        <end position="106"/>
    </location>
</feature>
<feature type="strand" evidence="6">
    <location>
        <begin position="117"/>
        <end position="119"/>
    </location>
</feature>
<feature type="strand" evidence="6">
    <location>
        <begin position="123"/>
        <end position="128"/>
    </location>
</feature>
<feature type="strand" evidence="6">
    <location>
        <begin position="131"/>
        <end position="134"/>
    </location>
</feature>
<feature type="helix" evidence="6">
    <location>
        <begin position="137"/>
        <end position="139"/>
    </location>
</feature>
<feature type="helix" evidence="6">
    <location>
        <begin position="142"/>
        <end position="159"/>
    </location>
</feature>
<feature type="strand" evidence="6">
    <location>
        <begin position="167"/>
        <end position="175"/>
    </location>
</feature>
<feature type="helix" evidence="6">
    <location>
        <begin position="176"/>
        <end position="178"/>
    </location>
</feature>
<feature type="strand" evidence="6">
    <location>
        <begin position="186"/>
        <end position="194"/>
    </location>
</feature>
<feature type="helix" evidence="6">
    <location>
        <begin position="197"/>
        <end position="213"/>
    </location>
</feature>
<feature type="turn" evidence="6">
    <location>
        <begin position="217"/>
        <end position="220"/>
    </location>
</feature>
<feature type="helix" evidence="6">
    <location>
        <begin position="221"/>
        <end position="224"/>
    </location>
</feature>
<feature type="strand" evidence="6">
    <location>
        <begin position="225"/>
        <end position="230"/>
    </location>
</feature>
<feature type="strand" evidence="6">
    <location>
        <begin position="232"/>
        <end position="238"/>
    </location>
</feature>
<feature type="strand" evidence="6">
    <location>
        <begin position="248"/>
        <end position="254"/>
    </location>
</feature>
<feature type="helix" evidence="6">
    <location>
        <begin position="259"/>
        <end position="261"/>
    </location>
</feature>
<feature type="helix" evidence="6">
    <location>
        <begin position="264"/>
        <end position="284"/>
    </location>
</feature>
<feature type="strand" evidence="6">
    <location>
        <begin position="290"/>
        <end position="295"/>
    </location>
</feature>
<feature type="helix" evidence="6">
    <location>
        <begin position="303"/>
        <end position="308"/>
    </location>
</feature>
<feature type="strand" evidence="6">
    <location>
        <begin position="312"/>
        <end position="317"/>
    </location>
</feature>
<feature type="helix" evidence="6">
    <location>
        <begin position="324"/>
        <end position="329"/>
    </location>
</feature>
<feature type="strand" evidence="6">
    <location>
        <begin position="333"/>
        <end position="336"/>
    </location>
</feature>
<feature type="helix" evidence="6">
    <location>
        <begin position="338"/>
        <end position="347"/>
    </location>
</feature>
<organism>
    <name type="scientific">Arabidopsis thaliana</name>
    <name type="common">Mouse-ear cress</name>
    <dbReference type="NCBI Taxonomy" id="3702"/>
    <lineage>
        <taxon>Eukaryota</taxon>
        <taxon>Viridiplantae</taxon>
        <taxon>Streptophyta</taxon>
        <taxon>Embryophyta</taxon>
        <taxon>Tracheophyta</taxon>
        <taxon>Spermatophyta</taxon>
        <taxon>Magnoliopsida</taxon>
        <taxon>eudicotyledons</taxon>
        <taxon>Gunneridae</taxon>
        <taxon>Pentapetalae</taxon>
        <taxon>rosids</taxon>
        <taxon>malvids</taxon>
        <taxon>Brassicales</taxon>
        <taxon>Brassicaceae</taxon>
        <taxon>Camelineae</taxon>
        <taxon>Arabidopsis</taxon>
    </lineage>
</organism>
<evidence type="ECO:0000256" key="1">
    <source>
        <dbReference type="SAM" id="MobiDB-lite"/>
    </source>
</evidence>
<evidence type="ECO:0000269" key="2">
    <source>
    </source>
</evidence>
<evidence type="ECO:0000269" key="3">
    <source>
    </source>
</evidence>
<evidence type="ECO:0000269" key="4">
    <source ref="6"/>
</evidence>
<evidence type="ECO:0000305" key="5"/>
<evidence type="ECO:0007829" key="6">
    <source>
        <dbReference type="PDB" id="1Z84"/>
    </source>
</evidence>
<evidence type="ECO:0007829" key="7">
    <source>
        <dbReference type="PDB" id="2H39"/>
    </source>
</evidence>
<name>AGLUP_ARATH</name>
<comment type="function">
    <text evidence="2">Catalyzes the conversion of ADP-glucose and inorganic phosphate (Pi) into glucose-1-phosphate and ADP. Does not possess galactose-1-phosphate uridylyltransferase activity.</text>
</comment>
<comment type="catalytic activity">
    <reaction evidence="2">
        <text>alpha-D-glucose 1-phosphate + ADP + H(+) = ADP-alpha-D-glucose + phosphate</text>
        <dbReference type="Rhea" id="RHEA:47708"/>
        <dbReference type="ChEBI" id="CHEBI:15378"/>
        <dbReference type="ChEBI" id="CHEBI:43474"/>
        <dbReference type="ChEBI" id="CHEBI:57498"/>
        <dbReference type="ChEBI" id="CHEBI:58601"/>
        <dbReference type="ChEBI" id="CHEBI:456216"/>
    </reaction>
</comment>
<comment type="cofactor">
    <cofactor evidence="2 3 4">
        <name>Zn(2+)</name>
        <dbReference type="ChEBI" id="CHEBI:29105"/>
    </cofactor>
    <text evidence="2 3 4">Binds 2 zinc ions per subunit.</text>
</comment>
<comment type="biophysicochemical properties">
    <kinetics>
        <KM evidence="2">6.9 uM for ADP-alpha-D-glucose (at pH 8.5 and 25 degrees Celsius)</KM>
        <KM evidence="2">90 uM for phosphate (at pH 8.5 and 25 degrees Celsius)</KM>
        <text evidence="2">kcat is 2.7 sec(-1).</text>
    </kinetics>
</comment>
<comment type="subunit">
    <text evidence="2 3 4">Homodimer.</text>
</comment>
<comment type="miscellaneous">
    <text evidence="2">Functions by a double-displacement chemical mechanism and ping-pong kinetics through a covalent nucleotidyl-enzyme intermediate.</text>
</comment>
<comment type="similarity">
    <text evidence="5">Belongs to the galactose-1-phosphate uridylyltransferase type 1 family.</text>
</comment>
<dbReference type="EC" id="2.7.7.-"/>
<dbReference type="EMBL" id="AB012246">
    <property type="protein sequence ID" value="BAB09478.1"/>
    <property type="molecule type" value="Genomic_DNA"/>
</dbReference>
<dbReference type="EMBL" id="CP002688">
    <property type="protein sequence ID" value="AED92518.1"/>
    <property type="molecule type" value="Genomic_DNA"/>
</dbReference>
<dbReference type="EMBL" id="BT005792">
    <property type="protein sequence ID" value="AAO64194.1"/>
    <property type="molecule type" value="mRNA"/>
</dbReference>
<dbReference type="EMBL" id="AY087378">
    <property type="protein sequence ID" value="AAM64928.1"/>
    <property type="molecule type" value="mRNA"/>
</dbReference>
<dbReference type="RefSeq" id="NP_197321.1">
    <property type="nucleotide sequence ID" value="NM_121825.4"/>
</dbReference>
<dbReference type="PDB" id="1Z84">
    <property type="method" value="X-ray"/>
    <property type="resolution" value="1.83 A"/>
    <property type="chains" value="A/B=1-351"/>
</dbReference>
<dbReference type="PDB" id="1ZWJ">
    <property type="method" value="X-ray"/>
    <property type="resolution" value="2.30 A"/>
    <property type="chains" value="A/B=1-351"/>
</dbReference>
<dbReference type="PDB" id="2H39">
    <property type="method" value="X-ray"/>
    <property type="resolution" value="2.23 A"/>
    <property type="chains" value="A/B=1-351"/>
</dbReference>
<dbReference type="PDB" id="2Q4H">
    <property type="method" value="X-ray"/>
    <property type="resolution" value="1.83 A"/>
    <property type="chains" value="A/B=1-351"/>
</dbReference>
<dbReference type="PDB" id="2Q4L">
    <property type="method" value="X-ray"/>
    <property type="resolution" value="2.30 A"/>
    <property type="chains" value="A/B=1-351"/>
</dbReference>
<dbReference type="PDBsum" id="1Z84"/>
<dbReference type="PDBsum" id="1ZWJ"/>
<dbReference type="PDBsum" id="2H39"/>
<dbReference type="PDBsum" id="2Q4H"/>
<dbReference type="PDBsum" id="2Q4L"/>
<dbReference type="SMR" id="Q9FK51"/>
<dbReference type="FunCoup" id="Q9FK51">
    <property type="interactions" value="1537"/>
</dbReference>
<dbReference type="STRING" id="3702.Q9FK51"/>
<dbReference type="GlyGen" id="Q9FK51">
    <property type="glycosylation" value="1 site"/>
</dbReference>
<dbReference type="iPTMnet" id="Q9FK51"/>
<dbReference type="PaxDb" id="3702-AT5G18200.1"/>
<dbReference type="ProteomicsDB" id="244771"/>
<dbReference type="DNASU" id="831938"/>
<dbReference type="EnsemblPlants" id="AT5G18200.1">
    <property type="protein sequence ID" value="AT5G18200.1"/>
    <property type="gene ID" value="AT5G18200"/>
</dbReference>
<dbReference type="GeneID" id="831938"/>
<dbReference type="Gramene" id="AT5G18200.1">
    <property type="protein sequence ID" value="AT5G18200.1"/>
    <property type="gene ID" value="AT5G18200"/>
</dbReference>
<dbReference type="KEGG" id="ath:AT5G18200"/>
<dbReference type="Araport" id="AT5G18200"/>
<dbReference type="TAIR" id="AT5G18200"/>
<dbReference type="eggNOG" id="KOG2958">
    <property type="taxonomic scope" value="Eukaryota"/>
</dbReference>
<dbReference type="HOGENOM" id="CLU_029960_1_0_1"/>
<dbReference type="InParanoid" id="Q9FK51"/>
<dbReference type="OMA" id="CFENRGA"/>
<dbReference type="PhylomeDB" id="Q9FK51"/>
<dbReference type="BioCyc" id="ARA:AT5G18200-MONOMER"/>
<dbReference type="SABIO-RK" id="Q9FK51"/>
<dbReference type="EvolutionaryTrace" id="Q9FK51"/>
<dbReference type="PRO" id="PR:Q9FK51"/>
<dbReference type="Proteomes" id="UP000006548">
    <property type="component" value="Chromosome 5"/>
</dbReference>
<dbReference type="ExpressionAtlas" id="Q9FK51">
    <property type="expression patterns" value="baseline and differential"/>
</dbReference>
<dbReference type="GO" id="GO:0043531">
    <property type="term" value="F:ADP binding"/>
    <property type="evidence" value="ECO:0000314"/>
    <property type="project" value="UniProtKB"/>
</dbReference>
<dbReference type="GO" id="GO:0016779">
    <property type="term" value="F:nucleotidyltransferase activity"/>
    <property type="evidence" value="ECO:0000314"/>
    <property type="project" value="UniProtKB"/>
</dbReference>
<dbReference type="GO" id="GO:0047345">
    <property type="term" value="F:ribose-5-phosphate adenylyltransferase activity"/>
    <property type="evidence" value="ECO:0000303"/>
    <property type="project" value="TAIR"/>
</dbReference>
<dbReference type="GO" id="GO:0008108">
    <property type="term" value="F:UDP-glucose:hexose-1-phosphate uridylyltransferase activity"/>
    <property type="evidence" value="ECO:0007669"/>
    <property type="project" value="InterPro"/>
</dbReference>
<dbReference type="GO" id="GO:0008270">
    <property type="term" value="F:zinc ion binding"/>
    <property type="evidence" value="ECO:0000314"/>
    <property type="project" value="UniProtKB"/>
</dbReference>
<dbReference type="GO" id="GO:0005975">
    <property type="term" value="P:carbohydrate metabolic process"/>
    <property type="evidence" value="ECO:0000304"/>
    <property type="project" value="TAIR"/>
</dbReference>
<dbReference type="GO" id="GO:0006012">
    <property type="term" value="P:galactose metabolic process"/>
    <property type="evidence" value="ECO:0007669"/>
    <property type="project" value="InterPro"/>
</dbReference>
<dbReference type="GO" id="GO:0006006">
    <property type="term" value="P:glucose metabolic process"/>
    <property type="evidence" value="ECO:0007669"/>
    <property type="project" value="UniProtKB-KW"/>
</dbReference>
<dbReference type="GO" id="GO:0080040">
    <property type="term" value="P:positive regulation of cellular response to phosphate starvation"/>
    <property type="evidence" value="ECO:0000314"/>
    <property type="project" value="TAIR"/>
</dbReference>
<dbReference type="CDD" id="cd00608">
    <property type="entry name" value="GalT"/>
    <property type="match status" value="1"/>
</dbReference>
<dbReference type="FunFam" id="3.30.428.10:FF:000032">
    <property type="entry name" value="ADP-glucose phosphorylase"/>
    <property type="match status" value="1"/>
</dbReference>
<dbReference type="Gene3D" id="3.30.428.10">
    <property type="entry name" value="HIT-like"/>
    <property type="match status" value="2"/>
</dbReference>
<dbReference type="InterPro" id="IPR053177">
    <property type="entry name" value="ADP-glucose_phosphorylase"/>
</dbReference>
<dbReference type="InterPro" id="IPR001937">
    <property type="entry name" value="GalP_UDPtransf1"/>
</dbReference>
<dbReference type="InterPro" id="IPR005850">
    <property type="entry name" value="GalP_Utransf_C"/>
</dbReference>
<dbReference type="InterPro" id="IPR005849">
    <property type="entry name" value="GalP_Utransf_N"/>
</dbReference>
<dbReference type="InterPro" id="IPR036265">
    <property type="entry name" value="HIT-like_sf"/>
</dbReference>
<dbReference type="NCBIfam" id="TIGR00209">
    <property type="entry name" value="galT_1"/>
    <property type="match status" value="1"/>
</dbReference>
<dbReference type="PANTHER" id="PTHR42763">
    <property type="entry name" value="ADP-GLUCOSE PHOSPHORYLASE"/>
    <property type="match status" value="1"/>
</dbReference>
<dbReference type="PANTHER" id="PTHR42763:SF2">
    <property type="entry name" value="ADP-GLUCOSE PHOSPHORYLASE"/>
    <property type="match status" value="1"/>
</dbReference>
<dbReference type="Pfam" id="PF02744">
    <property type="entry name" value="GalP_UDP_tr_C"/>
    <property type="match status" value="1"/>
</dbReference>
<dbReference type="Pfam" id="PF01087">
    <property type="entry name" value="GalP_UDP_transf"/>
    <property type="match status" value="1"/>
</dbReference>
<dbReference type="PIRSF" id="PIRSF000808">
    <property type="entry name" value="GalT"/>
    <property type="match status" value="1"/>
</dbReference>
<dbReference type="SUPFAM" id="SSF54197">
    <property type="entry name" value="HIT-like"/>
    <property type="match status" value="2"/>
</dbReference>
<keyword id="KW-0002">3D-structure</keyword>
<keyword id="KW-0119">Carbohydrate metabolism</keyword>
<keyword id="KW-0313">Glucose metabolism</keyword>
<keyword id="KW-0479">Metal-binding</keyword>
<keyword id="KW-0548">Nucleotidyltransferase</keyword>
<keyword id="KW-1185">Reference proteome</keyword>
<keyword id="KW-0808">Transferase</keyword>
<keyword id="KW-0862">Zinc</keyword>
<protein>
    <recommendedName>
        <fullName>ADP-glucose phosphorylase</fullName>
        <ecNumber>2.7.7.-</ecNumber>
    </recommendedName>
    <alternativeName>
        <fullName>ADP-glucose:phosphate adenylyltransferase</fullName>
    </alternativeName>
</protein>
<proteinExistence type="evidence at protein level"/>